<organism>
    <name type="scientific">Leifsonia xyli subsp. xyli (strain CTCB07)</name>
    <dbReference type="NCBI Taxonomy" id="281090"/>
    <lineage>
        <taxon>Bacteria</taxon>
        <taxon>Bacillati</taxon>
        <taxon>Actinomycetota</taxon>
        <taxon>Actinomycetes</taxon>
        <taxon>Micrococcales</taxon>
        <taxon>Microbacteriaceae</taxon>
        <taxon>Leifsonia</taxon>
    </lineage>
</organism>
<name>RL32_LEIXX</name>
<feature type="chain" id="PRO_0000172354" description="Large ribosomal subunit protein bL32">
    <location>
        <begin position="1"/>
        <end position="67"/>
    </location>
</feature>
<feature type="region of interest" description="Disordered" evidence="2">
    <location>
        <begin position="1"/>
        <end position="20"/>
    </location>
</feature>
<feature type="compositionally biased region" description="Basic residues" evidence="2">
    <location>
        <begin position="1"/>
        <end position="19"/>
    </location>
</feature>
<dbReference type="EMBL" id="AE016822">
    <property type="protein sequence ID" value="AAT88850.1"/>
    <property type="molecule type" value="Genomic_DNA"/>
</dbReference>
<dbReference type="RefSeq" id="WP_011185847.1">
    <property type="nucleotide sequence ID" value="NC_006087.1"/>
</dbReference>
<dbReference type="STRING" id="281090.Lxx09790"/>
<dbReference type="KEGG" id="lxx:Lxx09790"/>
<dbReference type="eggNOG" id="COG0333">
    <property type="taxonomic scope" value="Bacteria"/>
</dbReference>
<dbReference type="HOGENOM" id="CLU_2805252_0_0_11"/>
<dbReference type="Proteomes" id="UP000001306">
    <property type="component" value="Chromosome"/>
</dbReference>
<dbReference type="GO" id="GO:0015934">
    <property type="term" value="C:large ribosomal subunit"/>
    <property type="evidence" value="ECO:0007669"/>
    <property type="project" value="InterPro"/>
</dbReference>
<dbReference type="GO" id="GO:0003735">
    <property type="term" value="F:structural constituent of ribosome"/>
    <property type="evidence" value="ECO:0007669"/>
    <property type="project" value="InterPro"/>
</dbReference>
<dbReference type="GO" id="GO:0006412">
    <property type="term" value="P:translation"/>
    <property type="evidence" value="ECO:0007669"/>
    <property type="project" value="UniProtKB-UniRule"/>
</dbReference>
<dbReference type="HAMAP" id="MF_00340">
    <property type="entry name" value="Ribosomal_bL32"/>
    <property type="match status" value="1"/>
</dbReference>
<dbReference type="InterPro" id="IPR002677">
    <property type="entry name" value="Ribosomal_bL32"/>
</dbReference>
<dbReference type="InterPro" id="IPR011332">
    <property type="entry name" value="Ribosomal_zn-bd"/>
</dbReference>
<dbReference type="NCBIfam" id="TIGR01031">
    <property type="entry name" value="rpmF_bact"/>
    <property type="match status" value="1"/>
</dbReference>
<dbReference type="Pfam" id="PF01783">
    <property type="entry name" value="Ribosomal_L32p"/>
    <property type="match status" value="1"/>
</dbReference>
<dbReference type="SUPFAM" id="SSF57829">
    <property type="entry name" value="Zn-binding ribosomal proteins"/>
    <property type="match status" value="1"/>
</dbReference>
<comment type="similarity">
    <text evidence="1">Belongs to the bacterial ribosomal protein bL32 family.</text>
</comment>
<accession>Q6AFJ5</accession>
<protein>
    <recommendedName>
        <fullName evidence="1">Large ribosomal subunit protein bL32</fullName>
    </recommendedName>
    <alternativeName>
        <fullName evidence="3">50S ribosomal protein L32</fullName>
    </alternativeName>
</protein>
<sequence>MAVPKRKQSRANTHARRSQWKAEVPTLVKTVENGKVTYSLPHRAKVVEDSAGTALFLEYKGRKVADV</sequence>
<keyword id="KW-1185">Reference proteome</keyword>
<keyword id="KW-0687">Ribonucleoprotein</keyword>
<keyword id="KW-0689">Ribosomal protein</keyword>
<evidence type="ECO:0000255" key="1">
    <source>
        <dbReference type="HAMAP-Rule" id="MF_00340"/>
    </source>
</evidence>
<evidence type="ECO:0000256" key="2">
    <source>
        <dbReference type="SAM" id="MobiDB-lite"/>
    </source>
</evidence>
<evidence type="ECO:0000305" key="3"/>
<reference key="1">
    <citation type="journal article" date="2004" name="Mol. Plant Microbe Interact.">
        <title>The genome sequence of the Gram-positive sugarcane pathogen Leifsonia xyli subsp. xyli.</title>
        <authorList>
            <person name="Monteiro-Vitorello C.B."/>
            <person name="Camargo L.E.A."/>
            <person name="Van Sluys M.A."/>
            <person name="Kitajima J.P."/>
            <person name="Truffi D."/>
            <person name="do Amaral A.M."/>
            <person name="Harakava R."/>
            <person name="de Oliveira J.C.F."/>
            <person name="Wood D."/>
            <person name="de Oliveira M.C."/>
            <person name="Miyaki C.Y."/>
            <person name="Takita M.A."/>
            <person name="da Silva A.C.R."/>
            <person name="Furlan L.R."/>
            <person name="Carraro D.M."/>
            <person name="Camarotte G."/>
            <person name="Almeida N.F. Jr."/>
            <person name="Carrer H."/>
            <person name="Coutinho L.L."/>
            <person name="El-Dorry H.A."/>
            <person name="Ferro M.I.T."/>
            <person name="Gagliardi P.R."/>
            <person name="Giglioti E."/>
            <person name="Goldman M.H.S."/>
            <person name="Goldman G.H."/>
            <person name="Kimura E.T."/>
            <person name="Ferro E.S."/>
            <person name="Kuramae E.E."/>
            <person name="Lemos E.G.M."/>
            <person name="Lemos M.V.F."/>
            <person name="Mauro S.M.Z."/>
            <person name="Machado M.A."/>
            <person name="Marino C.L."/>
            <person name="Menck C.F."/>
            <person name="Nunes L.R."/>
            <person name="Oliveira R.C."/>
            <person name="Pereira G.G."/>
            <person name="Siqueira W."/>
            <person name="de Souza A.A."/>
            <person name="Tsai S.M."/>
            <person name="Zanca A.S."/>
            <person name="Simpson A.J.G."/>
            <person name="Brumbley S.M."/>
            <person name="Setubal J.C."/>
        </authorList>
    </citation>
    <scope>NUCLEOTIDE SEQUENCE [LARGE SCALE GENOMIC DNA]</scope>
    <source>
        <strain>CTCB07</strain>
    </source>
</reference>
<proteinExistence type="inferred from homology"/>
<gene>
    <name evidence="1" type="primary">rpmF</name>
    <name type="ordered locus">Lxx09790</name>
</gene>